<accession>P35809</accession>
<dbReference type="EC" id="3.2.1.8"/>
<dbReference type="PIR" id="A44597">
    <property type="entry name" value="A44597"/>
</dbReference>
<dbReference type="SMR" id="P35809"/>
<dbReference type="CAZy" id="GH11">
    <property type="family name" value="Glycoside Hydrolase Family 11"/>
</dbReference>
<dbReference type="VEuPathDB" id="FungiDB:SCHCODRAFT_02612721"/>
<dbReference type="BRENDA" id="3.2.1.8">
    <property type="organism ID" value="5611"/>
</dbReference>
<dbReference type="UniPathway" id="UPA00114"/>
<dbReference type="GO" id="GO:0005576">
    <property type="term" value="C:extracellular region"/>
    <property type="evidence" value="ECO:0007669"/>
    <property type="project" value="UniProtKB-SubCell"/>
</dbReference>
<dbReference type="GO" id="GO:0031176">
    <property type="term" value="F:endo-1,4-beta-xylanase activity"/>
    <property type="evidence" value="ECO:0007669"/>
    <property type="project" value="UniProtKB-EC"/>
</dbReference>
<dbReference type="GO" id="GO:0045493">
    <property type="term" value="P:xylan catabolic process"/>
    <property type="evidence" value="ECO:0007669"/>
    <property type="project" value="UniProtKB-UniPathway"/>
</dbReference>
<dbReference type="FunFam" id="2.60.120.180:FF:000001">
    <property type="entry name" value="Endo-1,4-beta-xylanase"/>
    <property type="match status" value="1"/>
</dbReference>
<dbReference type="Gene3D" id="2.60.120.180">
    <property type="match status" value="1"/>
</dbReference>
<dbReference type="InterPro" id="IPR013320">
    <property type="entry name" value="ConA-like_dom_sf"/>
</dbReference>
<dbReference type="InterPro" id="IPR013319">
    <property type="entry name" value="GH11/12"/>
</dbReference>
<dbReference type="InterPro" id="IPR018208">
    <property type="entry name" value="GH11_AS_1"/>
</dbReference>
<dbReference type="InterPro" id="IPR033119">
    <property type="entry name" value="GH11_AS_2"/>
</dbReference>
<dbReference type="InterPro" id="IPR033123">
    <property type="entry name" value="GH11_dom"/>
</dbReference>
<dbReference type="InterPro" id="IPR001137">
    <property type="entry name" value="Glyco_hydro_11"/>
</dbReference>
<dbReference type="PANTHER" id="PTHR46828">
    <property type="entry name" value="ENDO-1,4-BETA-XYLANASE A-RELATED"/>
    <property type="match status" value="1"/>
</dbReference>
<dbReference type="PANTHER" id="PTHR46828:SF2">
    <property type="entry name" value="ENDO-1,4-BETA-XYLANASE A-RELATED"/>
    <property type="match status" value="1"/>
</dbReference>
<dbReference type="Pfam" id="PF00457">
    <property type="entry name" value="Glyco_hydro_11"/>
    <property type="match status" value="1"/>
</dbReference>
<dbReference type="PRINTS" id="PR00911">
    <property type="entry name" value="GLHYDRLASE11"/>
</dbReference>
<dbReference type="SUPFAM" id="SSF49899">
    <property type="entry name" value="Concanavalin A-like lectins/glucanases"/>
    <property type="match status" value="1"/>
</dbReference>
<dbReference type="PROSITE" id="PS00776">
    <property type="entry name" value="GH11_1"/>
    <property type="match status" value="1"/>
</dbReference>
<dbReference type="PROSITE" id="PS00777">
    <property type="entry name" value="GH11_2"/>
    <property type="match status" value="1"/>
</dbReference>
<dbReference type="PROSITE" id="PS51761">
    <property type="entry name" value="GH11_3"/>
    <property type="match status" value="1"/>
</dbReference>
<sequence length="197" mass="20979">SGTPSSTGTDGGYYYSWWTDGAGDATYQNNGGGSYTLTWSGNNGNLVGGKGWNPGAASRSISYSGTYQPNGNSYLSVYGWTRSSLIEYYIVESYGSYDPSSAASHKGSVTCNGATYDILSTWRYNAPSIDGTQTFEQFWSVRNPKKAPGGSISGTVDVQCHFDAWKGLGMNLGSEHNYQIVATEGYQSSGTATITVT</sequence>
<name>XYNA_SCHCO</name>
<evidence type="ECO:0000255" key="1">
    <source>
        <dbReference type="PROSITE-ProRule" id="PRU01097"/>
    </source>
</evidence>
<evidence type="ECO:0000255" key="2">
    <source>
        <dbReference type="PROSITE-ProRule" id="PRU10063"/>
    </source>
</evidence>
<evidence type="ECO:0000269" key="3">
    <source>
    </source>
</evidence>
<evidence type="ECO:0000305" key="4"/>
<evidence type="ECO:0000305" key="5">
    <source>
    </source>
</evidence>
<protein>
    <recommendedName>
        <fullName>Endo-1,4-beta-xylanase A</fullName>
        <shortName>Xylanase A</shortName>
        <ecNumber>3.2.1.8</ecNumber>
    </recommendedName>
    <alternativeName>
        <fullName>1,4-beta-D-xylan xylanohydrolase A</fullName>
    </alternativeName>
</protein>
<comment type="function">
    <text>Hydrolyzes xylans into xylobiose and xylose.</text>
</comment>
<comment type="catalytic activity">
    <reaction>
        <text>Endohydrolysis of (1-&gt;4)-beta-D-xylosidic linkages in xylans.</text>
        <dbReference type="EC" id="3.2.1.8"/>
    </reaction>
</comment>
<comment type="biophysicochemical properties">
    <phDependence>
        <text>Active over a very broad pH range.</text>
    </phDependence>
</comment>
<comment type="pathway">
    <text>Glycan degradation; xylan degradation.</text>
</comment>
<comment type="subcellular location">
    <subcellularLocation>
        <location>Secreted</location>
    </subcellularLocation>
</comment>
<comment type="similarity">
    <text evidence="4">Belongs to the glycosyl hydrolase 11 (cellulase G) family.</text>
</comment>
<keyword id="KW-0119">Carbohydrate metabolism</keyword>
<keyword id="KW-0903">Direct protein sequencing</keyword>
<keyword id="KW-1015">Disulfide bond</keyword>
<keyword id="KW-0326">Glycosidase</keyword>
<keyword id="KW-0378">Hydrolase</keyword>
<keyword id="KW-0624">Polysaccharide degradation</keyword>
<keyword id="KW-0964">Secreted</keyword>
<keyword id="KW-0858">Xylan degradation</keyword>
<reference key="1">
    <citation type="book" date="1992" name="Xylans and xylanases">
        <editorList>
            <person name="Visser J."/>
            <person name="Beldman G."/>
            <person name="Kusters-van Someren M.A."/>
            <person name="Voragen A.G.J."/>
        </editorList>
        <authorList>
            <person name="Yaguchi M."/>
            <person name="Roy C."/>
            <person name="Ujiie M."/>
            <person name="Watson D.C."/>
            <person name="Wakarchuk W."/>
        </authorList>
    </citation>
    <scope>PROTEIN SEQUENCE</scope>
    <source>
        <strain>ATCC 38548 / Delmar / 13 / IHEM 5263</strain>
    </source>
</reference>
<reference key="2">
    <citation type="journal article" date="1993" name="FEBS Lett.">
        <title>Amino acid sequence and thermostability of xylanase A from Schizophyllum commune.</title>
        <authorList>
            <person name="Oku T."/>
            <person name="Roy C."/>
            <person name="Watson D.C."/>
            <person name="Wakarchuk W."/>
            <person name="Campbell R."/>
            <person name="Yaguchi M."/>
            <person name="Jurasek L."/>
            <person name="Paice M.G."/>
        </authorList>
    </citation>
    <scope>PROTEIN SEQUENCE</scope>
    <scope>DISULFIDE BONDS</scope>
    <source>
        <strain>ATCC 38548 / Delmar / 13 / IHEM 5263</strain>
    </source>
</reference>
<reference key="3">
    <citation type="journal article" date="1994" name="Eur. J. Biochem.">
        <title>Identification of a glutamate residue at the active site of xylanase A from Schizophyllum commune.</title>
        <authorList>
            <person name="Bray M.R."/>
            <person name="Clarke A.J."/>
        </authorList>
    </citation>
    <scope>PARTIAL PROTEIN SEQUENCE</scope>
    <scope>ACTIVE SITE GLU-87</scope>
    <source>
        <strain>ATCC 38548 / Delmar / 13 / IHEM 5263</strain>
    </source>
</reference>
<gene>
    <name type="primary">XYNA</name>
</gene>
<proteinExistence type="evidence at protein level"/>
<organism>
    <name type="scientific">Schizophyllum commune</name>
    <name type="common">Split gill fungus</name>
    <dbReference type="NCBI Taxonomy" id="5334"/>
    <lineage>
        <taxon>Eukaryota</taxon>
        <taxon>Fungi</taxon>
        <taxon>Dikarya</taxon>
        <taxon>Basidiomycota</taxon>
        <taxon>Agaricomycotina</taxon>
        <taxon>Agaricomycetes</taxon>
        <taxon>Agaricomycetidae</taxon>
        <taxon>Agaricales</taxon>
        <taxon>Schizophyllaceae</taxon>
        <taxon>Schizophyllum</taxon>
    </lineage>
</organism>
<feature type="chain" id="PRO_0000184071" description="Endo-1,4-beta-xylanase A">
    <location>
        <begin position="1"/>
        <end position="197"/>
    </location>
</feature>
<feature type="domain" description="GH11" evidence="1">
    <location>
        <begin position="1"/>
        <end position="197"/>
    </location>
</feature>
<feature type="active site" description="Nucleophile" evidence="5">
    <location>
        <position position="87"/>
    </location>
</feature>
<feature type="active site" description="Proton donor" evidence="2">
    <location>
        <position position="184"/>
    </location>
</feature>
<feature type="disulfide bond" evidence="3">
    <location>
        <begin position="111"/>
        <end position="160"/>
    </location>
</feature>